<name>LIFO_CHRVO</name>
<gene>
    <name type="primary">lifO</name>
    <name type="synonym">lipH</name>
    <name type="ordered locus">CV_2713</name>
</gene>
<organism>
    <name type="scientific">Chromobacterium violaceum (strain ATCC 12472 / DSM 30191 / JCM 1249 / CCUG 213 / NBRC 12614 / NCIMB 9131 / NCTC 9757 / MK)</name>
    <dbReference type="NCBI Taxonomy" id="243365"/>
    <lineage>
        <taxon>Bacteria</taxon>
        <taxon>Pseudomonadati</taxon>
        <taxon>Pseudomonadota</taxon>
        <taxon>Betaproteobacteria</taxon>
        <taxon>Neisseriales</taxon>
        <taxon>Chromobacteriaceae</taxon>
        <taxon>Chromobacterium</taxon>
    </lineage>
</organism>
<accession>Q7NUI5</accession>
<keyword id="KW-0997">Cell inner membrane</keyword>
<keyword id="KW-1003">Cell membrane</keyword>
<keyword id="KW-0143">Chaperone</keyword>
<keyword id="KW-0442">Lipid degradation</keyword>
<keyword id="KW-0443">Lipid metabolism</keyword>
<keyword id="KW-0472">Membrane</keyword>
<keyword id="KW-1185">Reference proteome</keyword>
<keyword id="KW-0812">Transmembrane</keyword>
<keyword id="KW-1133">Transmembrane helix</keyword>
<evidence type="ECO:0000250" key="1"/>
<evidence type="ECO:0000255" key="2"/>
<evidence type="ECO:0000305" key="3"/>
<dbReference type="EMBL" id="AE016825">
    <property type="protein sequence ID" value="AAQ60383.1"/>
    <property type="molecule type" value="Genomic_DNA"/>
</dbReference>
<dbReference type="RefSeq" id="WP_011136260.1">
    <property type="nucleotide sequence ID" value="NC_005085.1"/>
</dbReference>
<dbReference type="SMR" id="Q7NUI5"/>
<dbReference type="STRING" id="243365.CV_2713"/>
<dbReference type="KEGG" id="cvi:CV_2713"/>
<dbReference type="eggNOG" id="COG5380">
    <property type="taxonomic scope" value="Bacteria"/>
</dbReference>
<dbReference type="HOGENOM" id="CLU_064928_0_0_4"/>
<dbReference type="OrthoDB" id="8903554at2"/>
<dbReference type="Proteomes" id="UP000001424">
    <property type="component" value="Chromosome"/>
</dbReference>
<dbReference type="GO" id="GO:0005886">
    <property type="term" value="C:plasma membrane"/>
    <property type="evidence" value="ECO:0007669"/>
    <property type="project" value="UniProtKB-SubCell"/>
</dbReference>
<dbReference type="GO" id="GO:0051082">
    <property type="term" value="F:unfolded protein binding"/>
    <property type="evidence" value="ECO:0007669"/>
    <property type="project" value="UniProtKB-UniRule"/>
</dbReference>
<dbReference type="GO" id="GO:0016042">
    <property type="term" value="P:lipid catabolic process"/>
    <property type="evidence" value="ECO:0007669"/>
    <property type="project" value="UniProtKB-UniRule"/>
</dbReference>
<dbReference type="GO" id="GO:0006457">
    <property type="term" value="P:protein folding"/>
    <property type="evidence" value="ECO:0007669"/>
    <property type="project" value="UniProtKB-UniRule"/>
</dbReference>
<dbReference type="HAMAP" id="MF_00790">
    <property type="entry name" value="Lipase_chap"/>
    <property type="match status" value="1"/>
</dbReference>
<dbReference type="InterPro" id="IPR004961">
    <property type="entry name" value="Lipase_chaperone"/>
</dbReference>
<dbReference type="NCBIfam" id="NF002334">
    <property type="entry name" value="PRK01294.1-2"/>
    <property type="match status" value="1"/>
</dbReference>
<dbReference type="Pfam" id="PF03280">
    <property type="entry name" value="Lipase_chap"/>
    <property type="match status" value="1"/>
</dbReference>
<dbReference type="SUPFAM" id="SSF158855">
    <property type="entry name" value="Lipase chaperone-like"/>
    <property type="match status" value="1"/>
</dbReference>
<protein>
    <recommendedName>
        <fullName>Lipase chaperone</fullName>
    </recommendedName>
    <alternativeName>
        <fullName>Lipase activator protein</fullName>
    </alternativeName>
    <alternativeName>
        <fullName>Lipase foldase</fullName>
    </alternativeName>
    <alternativeName>
        <fullName>Lipase helper protein</fullName>
    </alternativeName>
    <alternativeName>
        <fullName>Lipase modulator</fullName>
    </alternativeName>
</protein>
<reference key="1">
    <citation type="journal article" date="2003" name="Proc. Natl. Acad. Sci. U.S.A.">
        <title>The complete genome sequence of Chromobacterium violaceum reveals remarkable and exploitable bacterial adaptability.</title>
        <authorList>
            <person name="Vasconcelos A.T.R."/>
            <person name="de Almeida D.F."/>
            <person name="Hungria M."/>
            <person name="Guimaraes C.T."/>
            <person name="Antonio R.V."/>
            <person name="Almeida F.C."/>
            <person name="de Almeida L.G.P."/>
            <person name="de Almeida R."/>
            <person name="Alves-Gomes J.A."/>
            <person name="Andrade E.M."/>
            <person name="Araripe J."/>
            <person name="de Araujo M.F.F."/>
            <person name="Astolfi-Filho S."/>
            <person name="Azevedo V."/>
            <person name="Baptista A.J."/>
            <person name="Bataus L.A.M."/>
            <person name="Batista J.S."/>
            <person name="Belo A."/>
            <person name="van den Berg C."/>
            <person name="Bogo M."/>
            <person name="Bonatto S."/>
            <person name="Bordignon J."/>
            <person name="Brigido M.M."/>
            <person name="Brito C.A."/>
            <person name="Brocchi M."/>
            <person name="Burity H.A."/>
            <person name="Camargo A.A."/>
            <person name="Cardoso D.D.P."/>
            <person name="Carneiro N.P."/>
            <person name="Carraro D.M."/>
            <person name="Carvalho C.M.B."/>
            <person name="Cascardo J.C.M."/>
            <person name="Cavada B.S."/>
            <person name="Chueire L.M.O."/>
            <person name="Creczynski-Pasa T.B."/>
            <person name="Cunha-Junior N.C."/>
            <person name="Fagundes N."/>
            <person name="Falcao C.L."/>
            <person name="Fantinatti F."/>
            <person name="Farias I.P."/>
            <person name="Felipe M.S.S."/>
            <person name="Ferrari L.P."/>
            <person name="Ferro J.A."/>
            <person name="Ferro M.I.T."/>
            <person name="Franco G.R."/>
            <person name="Freitas N.S.A."/>
            <person name="Furlan L.R."/>
            <person name="Gazzinelli R.T."/>
            <person name="Gomes E.A."/>
            <person name="Goncalves P.R."/>
            <person name="Grangeiro T.B."/>
            <person name="Grattapaglia D."/>
            <person name="Grisard E.C."/>
            <person name="Hanna E.S."/>
            <person name="Jardim S.N."/>
            <person name="Laurino J."/>
            <person name="Leoi L.C.T."/>
            <person name="Lima L.F.A."/>
            <person name="Loureiro M.F."/>
            <person name="Lyra M.C.C.P."/>
            <person name="Madeira H.M.F."/>
            <person name="Manfio G.P."/>
            <person name="Maranhao A.Q."/>
            <person name="Martins W.S."/>
            <person name="di Mauro S.M.Z."/>
            <person name="de Medeiros S.R.B."/>
            <person name="Meissner R.V."/>
            <person name="Moreira M.A.M."/>
            <person name="Nascimento F.F."/>
            <person name="Nicolas M.F."/>
            <person name="Oliveira J.G."/>
            <person name="Oliveira S.C."/>
            <person name="Paixao R.F.C."/>
            <person name="Parente J.A."/>
            <person name="Pedrosa F.O."/>
            <person name="Pena S.D.J."/>
            <person name="Pereira J.O."/>
            <person name="Pereira M."/>
            <person name="Pinto L.S.R.C."/>
            <person name="Pinto L.S."/>
            <person name="Porto J.I.R."/>
            <person name="Potrich D.P."/>
            <person name="Ramalho-Neto C.E."/>
            <person name="Reis A.M.M."/>
            <person name="Rigo L.U."/>
            <person name="Rondinelli E."/>
            <person name="Santos E.B.P."/>
            <person name="Santos F.R."/>
            <person name="Schneider M.P.C."/>
            <person name="Seuanez H.N."/>
            <person name="Silva A.M.R."/>
            <person name="da Silva A.L.C."/>
            <person name="Silva D.W."/>
            <person name="Silva R."/>
            <person name="Simoes I.C."/>
            <person name="Simon D."/>
            <person name="Soares C.M.A."/>
            <person name="Soares R.B.A."/>
            <person name="Souza E.M."/>
            <person name="Souza K.R.L."/>
            <person name="Souza R.C."/>
            <person name="Steffens M.B.R."/>
            <person name="Steindel M."/>
            <person name="Teixeira S.R."/>
            <person name="Urmenyi T."/>
            <person name="Vettore A."/>
            <person name="Wassem R."/>
            <person name="Zaha A."/>
            <person name="Simpson A.J.G."/>
        </authorList>
    </citation>
    <scope>NUCLEOTIDE SEQUENCE [LARGE SCALE GENOMIC DNA]</scope>
    <source>
        <strain>ATCC 12472 / DSM 30191 / JCM 1249 / CCUG 213 / NBRC 12614 / NCIMB 9131 / NCTC 9757 / MK</strain>
    </source>
</reference>
<proteinExistence type="inferred from homology"/>
<sequence>MRGLGLTLAAACAAWLAWWAWPDGAHSEAAAARQAARGGFAPSLIGTRPDGAAAEADGKLVVDQQLRQLFDYYLATLGERDLAVIRTELQGQLKRSLKNGPLAQAMGLFDRYVGYKRSLAGKAAAAATDLSHRLELVQAARRQYFSQAELDGLFGDEDRYDNFTARRLAIEANPALSVDEKRRRVAQLEQQLPPGLRAAREEPVKHLALADAEARLRQGGGGEQQLYQLRAGMVGQAAADRLGELDREQAAWQNRVDDFKRERTAILADGGLSAQQRQQALARLQAQRFSQQESLRLPAYLSN</sequence>
<feature type="chain" id="PRO_0000218482" description="Lipase chaperone">
    <location>
        <begin position="1"/>
        <end position="303"/>
    </location>
</feature>
<feature type="transmembrane region" description="Helical" evidence="2">
    <location>
        <begin position="7"/>
        <end position="23"/>
    </location>
</feature>
<comment type="function">
    <text evidence="1">May be involved in the folding of the extracellular lipase during its passage through the periplasm.</text>
</comment>
<comment type="subcellular location">
    <subcellularLocation>
        <location evidence="1">Cell inner membrane</location>
        <topology evidence="1">Single-pass membrane protein</topology>
        <orientation evidence="1">Periplasmic side</orientation>
    </subcellularLocation>
</comment>
<comment type="similarity">
    <text evidence="3">Belongs to the lipase chaperone family.</text>
</comment>